<dbReference type="EMBL" id="CR380952">
    <property type="protein sequence ID" value="CAG59149.1"/>
    <property type="molecule type" value="Genomic_DNA"/>
</dbReference>
<dbReference type="RefSeq" id="XP_446225.1">
    <property type="nucleotide sequence ID" value="XM_446225.1"/>
</dbReference>
<dbReference type="SMR" id="Q6FU69"/>
<dbReference type="FunCoup" id="Q6FU69">
    <property type="interactions" value="93"/>
</dbReference>
<dbReference type="STRING" id="284593.Q6FU69"/>
<dbReference type="EnsemblFungi" id="CAGL0F05841g-T">
    <property type="protein sequence ID" value="CAGL0F05841g-T-p1"/>
    <property type="gene ID" value="CAGL0F05841g"/>
</dbReference>
<dbReference type="KEGG" id="cgr:2887949"/>
<dbReference type="CGD" id="CAL0129455">
    <property type="gene designation" value="CAGL0F05841g"/>
</dbReference>
<dbReference type="VEuPathDB" id="FungiDB:CAGL0F05841g"/>
<dbReference type="HOGENOM" id="CLU_138722_0_0_1"/>
<dbReference type="InParanoid" id="Q6FU69"/>
<dbReference type="Proteomes" id="UP000002428">
    <property type="component" value="Chromosome F"/>
</dbReference>
<dbReference type="GO" id="GO:0008180">
    <property type="term" value="C:COP9 signalosome"/>
    <property type="evidence" value="ECO:0007669"/>
    <property type="project" value="UniProtKB-KW"/>
</dbReference>
<dbReference type="GO" id="GO:0005737">
    <property type="term" value="C:cytoplasm"/>
    <property type="evidence" value="ECO:0007669"/>
    <property type="project" value="UniProtKB-SubCell"/>
</dbReference>
<dbReference type="GO" id="GO:0000338">
    <property type="term" value="P:protein deneddylation"/>
    <property type="evidence" value="ECO:0007669"/>
    <property type="project" value="InterPro"/>
</dbReference>
<dbReference type="InterPro" id="IPR016806">
    <property type="entry name" value="Csn9_fungi"/>
</dbReference>
<dbReference type="PIRSF" id="PIRSF022632">
    <property type="entry name" value="UCP022632"/>
    <property type="match status" value="1"/>
</dbReference>
<evidence type="ECO:0000250" key="1"/>
<organism>
    <name type="scientific">Candida glabrata (strain ATCC 2001 / BCRC 20586 / JCM 3761 / NBRC 0622 / NRRL Y-65 / CBS 138)</name>
    <name type="common">Yeast</name>
    <name type="synonym">Nakaseomyces glabratus</name>
    <dbReference type="NCBI Taxonomy" id="284593"/>
    <lineage>
        <taxon>Eukaryota</taxon>
        <taxon>Fungi</taxon>
        <taxon>Dikarya</taxon>
        <taxon>Ascomycota</taxon>
        <taxon>Saccharomycotina</taxon>
        <taxon>Saccharomycetes</taxon>
        <taxon>Saccharomycetales</taxon>
        <taxon>Saccharomycetaceae</taxon>
        <taxon>Nakaseomyces</taxon>
    </lineage>
</organism>
<protein>
    <recommendedName>
        <fullName>COP9 signalosome complex subunit 9</fullName>
    </recommendedName>
</protein>
<sequence>MDSYKTQWLTSEGDERVRCELLAFGTVEDLERGTLNAQDRNVLVKLSILNYVYGKQVVTFDALLKNYAQAGIELTDNDIEMILLELCNHGIMDVSIDSVAREVKVLQLSRYRDVYCGERELLVVNPTKVITNIEIIDTLQAYSDKL</sequence>
<gene>
    <name type="primary">CSN9</name>
    <name type="ordered locus">CAGL0F05841g</name>
</gene>
<proteinExistence type="inferred from homology"/>
<comment type="function">
    <text evidence="1">Component of the COP9 signalosome (CSN) complex that acts as a regulator of the ubiquitin (Ubl) conjugation pathway by mediating the deneddylation of the cullin subunit of SCF-type E3 ubiquitin-protein ligase complexes. The CSN complex is involved in the regulation of the mating pheromone response (By similarity).</text>
</comment>
<comment type="subunit">
    <text>Component of a COP9 signalosome-like (CSN) complex.</text>
</comment>
<comment type="subcellular location">
    <subcellularLocation>
        <location evidence="1">Cytoplasm</location>
    </subcellularLocation>
    <subcellularLocation>
        <location evidence="1">Nucleus</location>
    </subcellularLocation>
</comment>
<reference key="1">
    <citation type="journal article" date="2004" name="Nature">
        <title>Genome evolution in yeasts.</title>
        <authorList>
            <person name="Dujon B."/>
            <person name="Sherman D."/>
            <person name="Fischer G."/>
            <person name="Durrens P."/>
            <person name="Casaregola S."/>
            <person name="Lafontaine I."/>
            <person name="de Montigny J."/>
            <person name="Marck C."/>
            <person name="Neuveglise C."/>
            <person name="Talla E."/>
            <person name="Goffard N."/>
            <person name="Frangeul L."/>
            <person name="Aigle M."/>
            <person name="Anthouard V."/>
            <person name="Babour A."/>
            <person name="Barbe V."/>
            <person name="Barnay S."/>
            <person name="Blanchin S."/>
            <person name="Beckerich J.-M."/>
            <person name="Beyne E."/>
            <person name="Bleykasten C."/>
            <person name="Boisrame A."/>
            <person name="Boyer J."/>
            <person name="Cattolico L."/>
            <person name="Confanioleri F."/>
            <person name="de Daruvar A."/>
            <person name="Despons L."/>
            <person name="Fabre E."/>
            <person name="Fairhead C."/>
            <person name="Ferry-Dumazet H."/>
            <person name="Groppi A."/>
            <person name="Hantraye F."/>
            <person name="Hennequin C."/>
            <person name="Jauniaux N."/>
            <person name="Joyet P."/>
            <person name="Kachouri R."/>
            <person name="Kerrest A."/>
            <person name="Koszul R."/>
            <person name="Lemaire M."/>
            <person name="Lesur I."/>
            <person name="Ma L."/>
            <person name="Muller H."/>
            <person name="Nicaud J.-M."/>
            <person name="Nikolski M."/>
            <person name="Oztas S."/>
            <person name="Ozier-Kalogeropoulos O."/>
            <person name="Pellenz S."/>
            <person name="Potier S."/>
            <person name="Richard G.-F."/>
            <person name="Straub M.-L."/>
            <person name="Suleau A."/>
            <person name="Swennen D."/>
            <person name="Tekaia F."/>
            <person name="Wesolowski-Louvel M."/>
            <person name="Westhof E."/>
            <person name="Wirth B."/>
            <person name="Zeniou-Meyer M."/>
            <person name="Zivanovic Y."/>
            <person name="Bolotin-Fukuhara M."/>
            <person name="Thierry A."/>
            <person name="Bouchier C."/>
            <person name="Caudron B."/>
            <person name="Scarpelli C."/>
            <person name="Gaillardin C."/>
            <person name="Weissenbach J."/>
            <person name="Wincker P."/>
            <person name="Souciet J.-L."/>
        </authorList>
    </citation>
    <scope>NUCLEOTIDE SEQUENCE [LARGE SCALE GENOMIC DNA]</scope>
    <source>
        <strain>ATCC 2001 / BCRC 20586 / JCM 3761 / NBRC 0622 / NRRL Y-65 / CBS 138</strain>
    </source>
</reference>
<accession>Q6FU69</accession>
<feature type="chain" id="PRO_0000121018" description="COP9 signalosome complex subunit 9">
    <location>
        <begin position="1"/>
        <end position="146"/>
    </location>
</feature>
<feature type="domain" description="PCI">
    <location>
        <begin position="1"/>
        <end position="107"/>
    </location>
</feature>
<keyword id="KW-0963">Cytoplasm</keyword>
<keyword id="KW-0539">Nucleus</keyword>
<keyword id="KW-1185">Reference proteome</keyword>
<keyword id="KW-0736">Signalosome</keyword>
<name>CSN9_CANGA</name>